<organism>
    <name type="scientific">Escherichia coli (strain K12 / MC4100 / BW2952)</name>
    <dbReference type="NCBI Taxonomy" id="595496"/>
    <lineage>
        <taxon>Bacteria</taxon>
        <taxon>Pseudomonadati</taxon>
        <taxon>Pseudomonadota</taxon>
        <taxon>Gammaproteobacteria</taxon>
        <taxon>Enterobacterales</taxon>
        <taxon>Enterobacteriaceae</taxon>
        <taxon>Escherichia</taxon>
    </lineage>
</organism>
<feature type="chain" id="PRO_1000201889" description="Phosphate acyltransferase">
    <location>
        <begin position="1"/>
        <end position="356"/>
    </location>
</feature>
<accession>C4ZS30</accession>
<reference key="1">
    <citation type="journal article" date="2009" name="J. Bacteriol.">
        <title>Genomic sequencing reveals regulatory mutations and recombinational events in the widely used MC4100 lineage of Escherichia coli K-12.</title>
        <authorList>
            <person name="Ferenci T."/>
            <person name="Zhou Z."/>
            <person name="Betteridge T."/>
            <person name="Ren Y."/>
            <person name="Liu Y."/>
            <person name="Feng L."/>
            <person name="Reeves P.R."/>
            <person name="Wang L."/>
        </authorList>
    </citation>
    <scope>NUCLEOTIDE SEQUENCE [LARGE SCALE GENOMIC DNA]</scope>
    <source>
        <strain>K12 / MC4100 / BW2952</strain>
    </source>
</reference>
<gene>
    <name evidence="1" type="primary">plsX</name>
    <name type="ordered locus">BWG_0938</name>
</gene>
<comment type="function">
    <text evidence="1">Catalyzes the reversible formation of acyl-phosphate (acyl-PO(4)) from acyl-[acyl-carrier-protein] (acyl-ACP). This enzyme utilizes acyl-ACP as fatty acyl donor, but not acyl-CoA.</text>
</comment>
<comment type="catalytic activity">
    <reaction evidence="1">
        <text>a fatty acyl-[ACP] + phosphate = an acyl phosphate + holo-[ACP]</text>
        <dbReference type="Rhea" id="RHEA:42292"/>
        <dbReference type="Rhea" id="RHEA-COMP:9685"/>
        <dbReference type="Rhea" id="RHEA-COMP:14125"/>
        <dbReference type="ChEBI" id="CHEBI:43474"/>
        <dbReference type="ChEBI" id="CHEBI:59918"/>
        <dbReference type="ChEBI" id="CHEBI:64479"/>
        <dbReference type="ChEBI" id="CHEBI:138651"/>
        <dbReference type="EC" id="2.3.1.274"/>
    </reaction>
</comment>
<comment type="pathway">
    <text evidence="1">Lipid metabolism; phospholipid metabolism.</text>
</comment>
<comment type="subunit">
    <text evidence="1">Homodimer. Probably interacts with PlsY.</text>
</comment>
<comment type="subcellular location">
    <subcellularLocation>
        <location evidence="1">Cytoplasm</location>
    </subcellularLocation>
    <text evidence="1">Associated with the membrane possibly through PlsY.</text>
</comment>
<comment type="similarity">
    <text evidence="1">Belongs to the PlsX family.</text>
</comment>
<evidence type="ECO:0000255" key="1">
    <source>
        <dbReference type="HAMAP-Rule" id="MF_00019"/>
    </source>
</evidence>
<proteinExistence type="inferred from homology"/>
<protein>
    <recommendedName>
        <fullName evidence="1">Phosphate acyltransferase</fullName>
        <ecNumber evidence="1">2.3.1.274</ecNumber>
    </recommendedName>
    <alternativeName>
        <fullName evidence="1">Acyl-ACP phosphotransacylase</fullName>
    </alternativeName>
    <alternativeName>
        <fullName evidence="1">Acyl-[acyl-carrier-protein]--phosphate acyltransferase</fullName>
    </alternativeName>
    <alternativeName>
        <fullName evidence="1">Phosphate-acyl-ACP acyltransferase</fullName>
    </alternativeName>
</protein>
<name>PLSX_ECOBW</name>
<keyword id="KW-0963">Cytoplasm</keyword>
<keyword id="KW-0444">Lipid biosynthesis</keyword>
<keyword id="KW-0443">Lipid metabolism</keyword>
<keyword id="KW-0594">Phospholipid biosynthesis</keyword>
<keyword id="KW-1208">Phospholipid metabolism</keyword>
<keyword id="KW-0808">Transferase</keyword>
<dbReference type="EC" id="2.3.1.274" evidence="1"/>
<dbReference type="EMBL" id="CP001396">
    <property type="protein sequence ID" value="ACR63070.1"/>
    <property type="molecule type" value="Genomic_DNA"/>
</dbReference>
<dbReference type="RefSeq" id="WP_000197597.1">
    <property type="nucleotide sequence ID" value="NC_012759.1"/>
</dbReference>
<dbReference type="SMR" id="C4ZS30"/>
<dbReference type="KEGG" id="ebw:BWG_0938"/>
<dbReference type="HOGENOM" id="CLU_039379_1_0_6"/>
<dbReference type="UniPathway" id="UPA00085"/>
<dbReference type="GO" id="GO:0005737">
    <property type="term" value="C:cytoplasm"/>
    <property type="evidence" value="ECO:0007669"/>
    <property type="project" value="UniProtKB-SubCell"/>
</dbReference>
<dbReference type="GO" id="GO:0043811">
    <property type="term" value="F:phosphate:acyl-[acyl carrier protein] acyltransferase activity"/>
    <property type="evidence" value="ECO:0007669"/>
    <property type="project" value="UniProtKB-UniRule"/>
</dbReference>
<dbReference type="GO" id="GO:0006633">
    <property type="term" value="P:fatty acid biosynthetic process"/>
    <property type="evidence" value="ECO:0007669"/>
    <property type="project" value="UniProtKB-UniRule"/>
</dbReference>
<dbReference type="GO" id="GO:0008654">
    <property type="term" value="P:phospholipid biosynthetic process"/>
    <property type="evidence" value="ECO:0007669"/>
    <property type="project" value="UniProtKB-KW"/>
</dbReference>
<dbReference type="FunFam" id="3.40.718.10:FF:000008">
    <property type="entry name" value="Phosphate acyltransferase"/>
    <property type="match status" value="1"/>
</dbReference>
<dbReference type="Gene3D" id="3.40.718.10">
    <property type="entry name" value="Isopropylmalate Dehydrogenase"/>
    <property type="match status" value="1"/>
</dbReference>
<dbReference type="HAMAP" id="MF_00019">
    <property type="entry name" value="PlsX"/>
    <property type="match status" value="1"/>
</dbReference>
<dbReference type="InterPro" id="IPR003664">
    <property type="entry name" value="FA_synthesis"/>
</dbReference>
<dbReference type="InterPro" id="IPR012281">
    <property type="entry name" value="Phospholipid_synth_PlsX-like"/>
</dbReference>
<dbReference type="NCBIfam" id="TIGR00182">
    <property type="entry name" value="plsX"/>
    <property type="match status" value="1"/>
</dbReference>
<dbReference type="PANTHER" id="PTHR30100">
    <property type="entry name" value="FATTY ACID/PHOSPHOLIPID SYNTHESIS PROTEIN PLSX"/>
    <property type="match status" value="1"/>
</dbReference>
<dbReference type="PANTHER" id="PTHR30100:SF1">
    <property type="entry name" value="PHOSPHATE ACYLTRANSFERASE"/>
    <property type="match status" value="1"/>
</dbReference>
<dbReference type="Pfam" id="PF02504">
    <property type="entry name" value="FA_synthesis"/>
    <property type="match status" value="1"/>
</dbReference>
<dbReference type="PIRSF" id="PIRSF002465">
    <property type="entry name" value="Phsphlp_syn_PlsX"/>
    <property type="match status" value="1"/>
</dbReference>
<dbReference type="SUPFAM" id="SSF53659">
    <property type="entry name" value="Isocitrate/Isopropylmalate dehydrogenase-like"/>
    <property type="match status" value="1"/>
</dbReference>
<sequence>MTRLTLALDVMGGDFGPSVTVPAALQALNSNSQLTLLLVGNSDAITPLLAKADFEQRSRLQIIPAQSVIASDARPSQAIRASRGSSMRVALELVKEGRAQACVSAGNTGALMGLAKLLLKPLEGIERPALVTVLPHQQKGKTVVLDLGANVDCDSTMLVQFAIMGSVLAEEVVEIPNPRVALLNIGEEEVKGLDSIRDASAVLKTIPSINYIGYLEANELLTGKTDVLVCDGFTGNVTLKTMEGVVRMFLSLLKSQGEGKKRSWWLLLLKRWLQKSLTRRFSHLNPDQYNGACLLGLRGTVIKSHGAANQRAFAVAIEQAVQAVQRQVPQRIAARLESVYPAGFELLDGGKSGTLR</sequence>